<organism>
    <name type="scientific">Talaromyces stipitatus (strain ATCC 10500 / CBS 375.48 / QM 6759 / NRRL 1006)</name>
    <name type="common">Penicillium stipitatum</name>
    <dbReference type="NCBI Taxonomy" id="441959"/>
    <lineage>
        <taxon>Eukaryota</taxon>
        <taxon>Fungi</taxon>
        <taxon>Dikarya</taxon>
        <taxon>Ascomycota</taxon>
        <taxon>Pezizomycotina</taxon>
        <taxon>Eurotiomycetes</taxon>
        <taxon>Eurotiomycetidae</taxon>
        <taxon>Eurotiales</taxon>
        <taxon>Trichocomaceae</taxon>
        <taxon>Talaromyces</taxon>
        <taxon>Talaromyces sect. Talaromyces</taxon>
    </lineage>
</organism>
<accession>B8MK20</accession>
<keyword id="KW-0175">Coiled coil</keyword>
<keyword id="KW-0256">Endoplasmic reticulum</keyword>
<keyword id="KW-0342">GTP-binding</keyword>
<keyword id="KW-0378">Hydrolase</keyword>
<keyword id="KW-0472">Membrane</keyword>
<keyword id="KW-0547">Nucleotide-binding</keyword>
<keyword id="KW-1185">Reference proteome</keyword>
<keyword id="KW-0812">Transmembrane</keyword>
<keyword id="KW-1133">Transmembrane helix</keyword>
<proteinExistence type="inferred from homology"/>
<dbReference type="EC" id="3.6.5.-" evidence="1"/>
<dbReference type="EMBL" id="EQ962657">
    <property type="protein sequence ID" value="EED14837.1"/>
    <property type="molecule type" value="Genomic_DNA"/>
</dbReference>
<dbReference type="RefSeq" id="XP_002484790.1">
    <property type="nucleotide sequence ID" value="XM_002484745.1"/>
</dbReference>
<dbReference type="SMR" id="B8MK20"/>
<dbReference type="FunCoup" id="B8MK20">
    <property type="interactions" value="71"/>
</dbReference>
<dbReference type="STRING" id="441959.B8MK20"/>
<dbReference type="GeneID" id="8104954"/>
<dbReference type="VEuPathDB" id="FungiDB:TSTA_043120"/>
<dbReference type="eggNOG" id="KOG2203">
    <property type="taxonomic scope" value="Eukaryota"/>
</dbReference>
<dbReference type="HOGENOM" id="CLU_011270_0_0_1"/>
<dbReference type="InParanoid" id="B8MK20"/>
<dbReference type="OMA" id="PIIKMTE"/>
<dbReference type="OrthoDB" id="1597724at2759"/>
<dbReference type="PhylomeDB" id="B8MK20"/>
<dbReference type="Proteomes" id="UP000001745">
    <property type="component" value="Unassembled WGS sequence"/>
</dbReference>
<dbReference type="GO" id="GO:0005789">
    <property type="term" value="C:endoplasmic reticulum membrane"/>
    <property type="evidence" value="ECO:0007669"/>
    <property type="project" value="UniProtKB-SubCell"/>
</dbReference>
<dbReference type="GO" id="GO:0005525">
    <property type="term" value="F:GTP binding"/>
    <property type="evidence" value="ECO:0007669"/>
    <property type="project" value="UniProtKB-UniRule"/>
</dbReference>
<dbReference type="GO" id="GO:0003924">
    <property type="term" value="F:GTPase activity"/>
    <property type="evidence" value="ECO:0007669"/>
    <property type="project" value="UniProtKB-UniRule"/>
</dbReference>
<dbReference type="GO" id="GO:0016320">
    <property type="term" value="P:endoplasmic reticulum membrane fusion"/>
    <property type="evidence" value="ECO:0007669"/>
    <property type="project" value="TreeGrafter"/>
</dbReference>
<dbReference type="CDD" id="cd01851">
    <property type="entry name" value="GBP"/>
    <property type="match status" value="1"/>
</dbReference>
<dbReference type="FunFam" id="3.40.50.300:FF:000727">
    <property type="entry name" value="Protein SEY1 homolog"/>
    <property type="match status" value="1"/>
</dbReference>
<dbReference type="Gene3D" id="3.40.50.300">
    <property type="entry name" value="P-loop containing nucleotide triphosphate hydrolases"/>
    <property type="match status" value="1"/>
</dbReference>
<dbReference type="HAMAP" id="MF_03109">
    <property type="entry name" value="Sey1"/>
    <property type="match status" value="1"/>
</dbReference>
<dbReference type="InterPro" id="IPR030386">
    <property type="entry name" value="G_GB1_RHD3_dom"/>
</dbReference>
<dbReference type="InterPro" id="IPR027417">
    <property type="entry name" value="P-loop_NTPase"/>
</dbReference>
<dbReference type="InterPro" id="IPR008803">
    <property type="entry name" value="RHD3/Sey1"/>
</dbReference>
<dbReference type="InterPro" id="IPR046758">
    <property type="entry name" value="Sey1/RHD3-like_3HB"/>
</dbReference>
<dbReference type="PANTHER" id="PTHR45923">
    <property type="entry name" value="PROTEIN SEY1"/>
    <property type="match status" value="1"/>
</dbReference>
<dbReference type="PANTHER" id="PTHR45923:SF2">
    <property type="entry name" value="PROTEIN SEY1"/>
    <property type="match status" value="1"/>
</dbReference>
<dbReference type="Pfam" id="PF05879">
    <property type="entry name" value="RHD3_GTPase"/>
    <property type="match status" value="1"/>
</dbReference>
<dbReference type="Pfam" id="PF20428">
    <property type="entry name" value="Sey1_3HB"/>
    <property type="match status" value="1"/>
</dbReference>
<dbReference type="SUPFAM" id="SSF52540">
    <property type="entry name" value="P-loop containing nucleoside triphosphate hydrolases"/>
    <property type="match status" value="1"/>
</dbReference>
<dbReference type="PROSITE" id="PS51715">
    <property type="entry name" value="G_GB1_RHD3"/>
    <property type="match status" value="1"/>
</dbReference>
<evidence type="ECO:0000255" key="1">
    <source>
        <dbReference type="HAMAP-Rule" id="MF_03109"/>
    </source>
</evidence>
<evidence type="ECO:0000255" key="2">
    <source>
        <dbReference type="PROSITE-ProRule" id="PRU01052"/>
    </source>
</evidence>
<evidence type="ECO:0000256" key="3">
    <source>
        <dbReference type="SAM" id="MobiDB-lite"/>
    </source>
</evidence>
<protein>
    <recommendedName>
        <fullName evidence="1">Protein sey1</fullName>
        <ecNumber evidence="1">3.6.5.-</ecNumber>
    </recommendedName>
</protein>
<comment type="function">
    <text evidence="1">Cooperates with the reticulon proteins and tubule-shaping DP1 family proteins to generate and maintain the structure of the tubular endoplasmic reticulum network. Has GTPase activity, which is required for its function in ER organization.</text>
</comment>
<comment type="subcellular location">
    <subcellularLocation>
        <location evidence="1">Endoplasmic reticulum membrane</location>
        <topology evidence="1">Multi-pass membrane protein</topology>
    </subcellularLocation>
    <text evidence="1">Enriched in the cortical ER. Concentrated in punctae along the ER tubules.</text>
</comment>
<comment type="similarity">
    <text evidence="2">Belongs to the TRAFAC class dynamin-like GTPase superfamily. GB1/RHD3 GTPase family. RHD3 subfamily.</text>
</comment>
<feature type="chain" id="PRO_0000385002" description="Protein sey1">
    <location>
        <begin position="1"/>
        <end position="880"/>
    </location>
</feature>
<feature type="topological domain" description="Cytoplasmic" evidence="1">
    <location>
        <begin position="1"/>
        <end position="762"/>
    </location>
</feature>
<feature type="transmembrane region" description="Helical" evidence="1">
    <location>
        <begin position="763"/>
        <end position="783"/>
    </location>
</feature>
<feature type="topological domain" description="Lumenal" evidence="1">
    <location>
        <begin position="784"/>
        <end position="786"/>
    </location>
</feature>
<feature type="transmembrane region" description="Helical" evidence="1">
    <location>
        <begin position="787"/>
        <end position="807"/>
    </location>
</feature>
<feature type="topological domain" description="Cytoplasmic" evidence="1">
    <location>
        <begin position="808"/>
        <end position="880"/>
    </location>
</feature>
<feature type="domain" description="GB1/RHD3-type G" evidence="2">
    <location>
        <begin position="68"/>
        <end position="307"/>
    </location>
</feature>
<feature type="region of interest" description="Disordered" evidence="3">
    <location>
        <begin position="846"/>
        <end position="880"/>
    </location>
</feature>
<feature type="coiled-coil region" evidence="1">
    <location>
        <begin position="463"/>
        <end position="517"/>
    </location>
</feature>
<feature type="coiled-coil region" evidence="1">
    <location>
        <begin position="812"/>
        <end position="839"/>
    </location>
</feature>
<feature type="binding site" evidence="1">
    <location>
        <begin position="78"/>
        <end position="85"/>
    </location>
    <ligand>
        <name>GTP</name>
        <dbReference type="ChEBI" id="CHEBI:37565"/>
    </ligand>
</feature>
<gene>
    <name type="primary">sey1</name>
    <name type="ORF">TSTA_043120</name>
</gene>
<sequence length="880" mass="99244">MTDQRPRAESRSLTAPSLIGTNGHFASVGDAAHDPKAYEHGVQVIDEEKQFNPNLSKYLSLENVANAGFNYHLISVFGSQSTGKSTLLNHLFGTQFSVMSDRERRQTTKGIWMSKNKTKHEDPNARMADNILVMDVEGTDGRERGEDQDFERKSALFALATSEVLIVNIWEHQVGLYQGANMGLLKTVFEVNLQLFLKDKNTTHRSLLFFVIRDFMGTTPLKNLEITLLEDLSRIWASLSKPQGLERSTIHDYFDFAFYGLPHKGYKPEEFAAEAKKLGSRFREGRRDRKEQLIGASIESGVFLPEYHRRIPADGFAHYAEGIWDQIVNNKDLDLPTQQELLAQFRCDEILREVLVAFDEAIVPFEEKQAAGVRAGEPTILGGLGPAMRGARTKAVKNFETEASRYHKGVYQRKRTELEGKIDTRLKALFQGQLNAAHKSGVKDFSDAVSNAVKAGQKKGASYDFAEIVKQETQAALERFEKEARATVVEGTAWSNYKQELKLYQKDLGEVSGQLRRDEMRRLATRVERWVKSRLSHSVSLEFNSLGSGRGGSGAPETGDKPAENKIWDRIWNLFVQTVLDAERRFTDRATSLDASVEEVDVGLWRLRRKSWSVLRLKIEEEMMEGNLLLKLRENFEDKFRYDEAGVPRIWRPTDDIEGVYTRARESTLTLIPLLSKFILAENNSPPPLDRWIGHTPSSATAADEEDLTPIGGVDAEDGRSLEEEMTILNDAKRQDLTVRFKKAADGVYVEAKRSAIGGITQVPLYFYGLLLALGWNEIWAVLRNPAYFFLLFVCAVGAYVTYQLNLWGPMLKMADAASKQALEELKKRLREFLEASDTGRQAMAMSANATGRDAGEEFEMSSLNRGGKKAEDEDENDDI</sequence>
<reference key="1">
    <citation type="journal article" date="2015" name="Genome Announc.">
        <title>Genome sequence of the AIDS-associated pathogen Penicillium marneffei (ATCC18224) and its near taxonomic relative Talaromyces stipitatus (ATCC10500).</title>
        <authorList>
            <person name="Nierman W.C."/>
            <person name="Fedorova-Abrams N.D."/>
            <person name="Andrianopoulos A."/>
        </authorList>
    </citation>
    <scope>NUCLEOTIDE SEQUENCE [LARGE SCALE GENOMIC DNA]</scope>
    <source>
        <strain>ATCC 10500 / CBS 375.48 / QM 6759 / NRRL 1006</strain>
    </source>
</reference>
<name>SEY1_TALSN</name>